<reference key="1">
    <citation type="journal article" date="2006" name="Proc. Natl. Acad. Sci. U.S.A.">
        <title>Genome sequence of Synechococcus CC9311: insights into adaptation to a coastal environment.</title>
        <authorList>
            <person name="Palenik B."/>
            <person name="Ren Q."/>
            <person name="Dupont C.L."/>
            <person name="Myers G.S."/>
            <person name="Heidelberg J.F."/>
            <person name="Badger J.H."/>
            <person name="Madupu R."/>
            <person name="Nelson W.C."/>
            <person name="Brinkac L.M."/>
            <person name="Dodson R.J."/>
            <person name="Durkin A.S."/>
            <person name="Daugherty S.C."/>
            <person name="Sullivan S.A."/>
            <person name="Khouri H."/>
            <person name="Mohamoud Y."/>
            <person name="Halpin R."/>
            <person name="Paulsen I.T."/>
        </authorList>
    </citation>
    <scope>NUCLEOTIDE SEQUENCE [LARGE SCALE GENOMIC DNA]</scope>
    <source>
        <strain>CC9311</strain>
    </source>
</reference>
<name>SYE_SYNS3</name>
<gene>
    <name evidence="1" type="primary">gltX</name>
    <name type="ordered locus">sync_2163</name>
</gene>
<protein>
    <recommendedName>
        <fullName evidence="1">Glutamate--tRNA ligase</fullName>
        <ecNumber evidence="1">6.1.1.17</ecNumber>
    </recommendedName>
    <alternativeName>
        <fullName evidence="1">Glutamyl-tRNA synthetase</fullName>
        <shortName evidence="1">GluRS</shortName>
    </alternativeName>
</protein>
<accession>Q0I858</accession>
<comment type="function">
    <text evidence="1">Catalyzes the attachment of glutamate to tRNA(Glu) in a two-step reaction: glutamate is first activated by ATP to form Glu-AMP and then transferred to the acceptor end of tRNA(Glu).</text>
</comment>
<comment type="catalytic activity">
    <reaction evidence="1">
        <text>tRNA(Glu) + L-glutamate + ATP = L-glutamyl-tRNA(Glu) + AMP + diphosphate</text>
        <dbReference type="Rhea" id="RHEA:23540"/>
        <dbReference type="Rhea" id="RHEA-COMP:9663"/>
        <dbReference type="Rhea" id="RHEA-COMP:9680"/>
        <dbReference type="ChEBI" id="CHEBI:29985"/>
        <dbReference type="ChEBI" id="CHEBI:30616"/>
        <dbReference type="ChEBI" id="CHEBI:33019"/>
        <dbReference type="ChEBI" id="CHEBI:78442"/>
        <dbReference type="ChEBI" id="CHEBI:78520"/>
        <dbReference type="ChEBI" id="CHEBI:456215"/>
        <dbReference type="EC" id="6.1.1.17"/>
    </reaction>
</comment>
<comment type="subunit">
    <text evidence="1">Monomer.</text>
</comment>
<comment type="subcellular location">
    <subcellularLocation>
        <location evidence="1">Cytoplasm</location>
    </subcellularLocation>
</comment>
<comment type="similarity">
    <text evidence="1">Belongs to the class-I aminoacyl-tRNA synthetase family. Glutamate--tRNA ligase type 1 subfamily.</text>
</comment>
<evidence type="ECO:0000255" key="1">
    <source>
        <dbReference type="HAMAP-Rule" id="MF_00022"/>
    </source>
</evidence>
<keyword id="KW-0030">Aminoacyl-tRNA synthetase</keyword>
<keyword id="KW-0067">ATP-binding</keyword>
<keyword id="KW-0963">Cytoplasm</keyword>
<keyword id="KW-0436">Ligase</keyword>
<keyword id="KW-0547">Nucleotide-binding</keyword>
<keyword id="KW-0648">Protein biosynthesis</keyword>
<keyword id="KW-1185">Reference proteome</keyword>
<sequence>MTVRVRLAPSPTGTLHIGTARTAVFNWLFARHQNGKFLLRIEDTDKERSKPEFTENILDGLRWLGLDWDEEPVIQSERIEVHRQAISQLLAQGLAYRCYVSEQELDAMREAQRASGQPPRYDNRHRHLTGDQEEAYRAEGREAVIRFRIDDEATIAWTDMVRGPMQWRGADLGGDMVIARRAPATTVGDPLYNLVVVVDDAAMAISHVIRGEDHIANTAKQLLLYQALELNCPTFAHTPLILNPEGRKLSKRDGVTSIGDFQEMGYTAEALANYMTLLGWSVPEGTEERFTLRQAAEVFSFDRVNKAGAKFDWDKLNWLNAQVLHGWSPAELLAALEPRWQKQGWVVSDPLWANDLAVLLGPSLTLIEDGVTQARPFFEEPPLEEDGLKQLEQEGARPALQALLSALELNAWDGLDVERAQTLLKEAAASAEVKKGVLMKSLRAALLGRLQGPDLITTWALLARLGHDRQRLRRCL</sequence>
<organism>
    <name type="scientific">Synechococcus sp. (strain CC9311)</name>
    <dbReference type="NCBI Taxonomy" id="64471"/>
    <lineage>
        <taxon>Bacteria</taxon>
        <taxon>Bacillati</taxon>
        <taxon>Cyanobacteriota</taxon>
        <taxon>Cyanophyceae</taxon>
        <taxon>Synechococcales</taxon>
        <taxon>Synechococcaceae</taxon>
        <taxon>Synechococcus</taxon>
    </lineage>
</organism>
<proteinExistence type="inferred from homology"/>
<feature type="chain" id="PRO_1000001981" description="Glutamate--tRNA ligase">
    <location>
        <begin position="1"/>
        <end position="476"/>
    </location>
</feature>
<feature type="short sequence motif" description="'HIGH' region" evidence="1">
    <location>
        <begin position="9"/>
        <end position="19"/>
    </location>
</feature>
<feature type="short sequence motif" description="'KMSKS' region" evidence="1">
    <location>
        <begin position="248"/>
        <end position="252"/>
    </location>
</feature>
<feature type="binding site" evidence="1">
    <location>
        <position position="251"/>
    </location>
    <ligand>
        <name>ATP</name>
        <dbReference type="ChEBI" id="CHEBI:30616"/>
    </ligand>
</feature>
<dbReference type="EC" id="6.1.1.17" evidence="1"/>
<dbReference type="EMBL" id="CP000435">
    <property type="protein sequence ID" value="ABI47571.1"/>
    <property type="molecule type" value="Genomic_DNA"/>
</dbReference>
<dbReference type="RefSeq" id="WP_011620076.1">
    <property type="nucleotide sequence ID" value="NC_008319.1"/>
</dbReference>
<dbReference type="SMR" id="Q0I858"/>
<dbReference type="STRING" id="64471.sync_2163"/>
<dbReference type="KEGG" id="syg:sync_2163"/>
<dbReference type="eggNOG" id="COG0008">
    <property type="taxonomic scope" value="Bacteria"/>
</dbReference>
<dbReference type="HOGENOM" id="CLU_015768_6_0_3"/>
<dbReference type="OrthoDB" id="9807503at2"/>
<dbReference type="Proteomes" id="UP000001961">
    <property type="component" value="Chromosome"/>
</dbReference>
<dbReference type="GO" id="GO:0005829">
    <property type="term" value="C:cytosol"/>
    <property type="evidence" value="ECO:0007669"/>
    <property type="project" value="TreeGrafter"/>
</dbReference>
<dbReference type="GO" id="GO:0005524">
    <property type="term" value="F:ATP binding"/>
    <property type="evidence" value="ECO:0007669"/>
    <property type="project" value="UniProtKB-UniRule"/>
</dbReference>
<dbReference type="GO" id="GO:0004818">
    <property type="term" value="F:glutamate-tRNA ligase activity"/>
    <property type="evidence" value="ECO:0007669"/>
    <property type="project" value="UniProtKB-UniRule"/>
</dbReference>
<dbReference type="GO" id="GO:0000049">
    <property type="term" value="F:tRNA binding"/>
    <property type="evidence" value="ECO:0007669"/>
    <property type="project" value="InterPro"/>
</dbReference>
<dbReference type="GO" id="GO:0008270">
    <property type="term" value="F:zinc ion binding"/>
    <property type="evidence" value="ECO:0007669"/>
    <property type="project" value="InterPro"/>
</dbReference>
<dbReference type="GO" id="GO:0006424">
    <property type="term" value="P:glutamyl-tRNA aminoacylation"/>
    <property type="evidence" value="ECO:0007669"/>
    <property type="project" value="UniProtKB-UniRule"/>
</dbReference>
<dbReference type="CDD" id="cd00808">
    <property type="entry name" value="GluRS_core"/>
    <property type="match status" value="1"/>
</dbReference>
<dbReference type="FunFam" id="3.40.50.620:FF:000007">
    <property type="entry name" value="Glutamate--tRNA ligase"/>
    <property type="match status" value="1"/>
</dbReference>
<dbReference type="Gene3D" id="1.10.10.350">
    <property type="match status" value="1"/>
</dbReference>
<dbReference type="Gene3D" id="1.10.8.70">
    <property type="entry name" value="Glutamate-tRNA synthetase, class I, anticodon-binding domain 1"/>
    <property type="match status" value="1"/>
</dbReference>
<dbReference type="Gene3D" id="1.10.1160.10">
    <property type="entry name" value="Glutamyl-trna Synthetase, Domain 2"/>
    <property type="match status" value="1"/>
</dbReference>
<dbReference type="Gene3D" id="3.90.800.10">
    <property type="entry name" value="Glutamyl-tRNA Synthetase, Domain 3"/>
    <property type="match status" value="1"/>
</dbReference>
<dbReference type="Gene3D" id="3.40.50.620">
    <property type="entry name" value="HUPs"/>
    <property type="match status" value="1"/>
</dbReference>
<dbReference type="HAMAP" id="MF_00022">
    <property type="entry name" value="Glu_tRNA_synth_type1"/>
    <property type="match status" value="1"/>
</dbReference>
<dbReference type="InterPro" id="IPR045462">
    <property type="entry name" value="aa-tRNA-synth_I_cd-bd"/>
</dbReference>
<dbReference type="InterPro" id="IPR020751">
    <property type="entry name" value="aa-tRNA-synth_I_codon-bd_sub2"/>
</dbReference>
<dbReference type="InterPro" id="IPR001412">
    <property type="entry name" value="aa-tRNA-synth_I_CS"/>
</dbReference>
<dbReference type="InterPro" id="IPR008925">
    <property type="entry name" value="aa_tRNA-synth_I_cd-bd_sf"/>
</dbReference>
<dbReference type="InterPro" id="IPR004527">
    <property type="entry name" value="Glu-tRNA-ligase_bac/mito"/>
</dbReference>
<dbReference type="InterPro" id="IPR020752">
    <property type="entry name" value="Glu-tRNA-synth_I_codon-bd_sub1"/>
</dbReference>
<dbReference type="InterPro" id="IPR000924">
    <property type="entry name" value="Glu/Gln-tRNA-synth"/>
</dbReference>
<dbReference type="InterPro" id="IPR020058">
    <property type="entry name" value="Glu/Gln-tRNA-synth_Ib_cat-dom"/>
</dbReference>
<dbReference type="InterPro" id="IPR020061">
    <property type="entry name" value="Glu_tRNA_lig_a-bdl"/>
</dbReference>
<dbReference type="InterPro" id="IPR049940">
    <property type="entry name" value="GluQ/Sye"/>
</dbReference>
<dbReference type="InterPro" id="IPR033910">
    <property type="entry name" value="GluRS_core"/>
</dbReference>
<dbReference type="InterPro" id="IPR014729">
    <property type="entry name" value="Rossmann-like_a/b/a_fold"/>
</dbReference>
<dbReference type="NCBIfam" id="TIGR00464">
    <property type="entry name" value="gltX_bact"/>
    <property type="match status" value="1"/>
</dbReference>
<dbReference type="NCBIfam" id="NF004315">
    <property type="entry name" value="PRK05710.1-4"/>
    <property type="match status" value="1"/>
</dbReference>
<dbReference type="PANTHER" id="PTHR43311">
    <property type="entry name" value="GLUTAMATE--TRNA LIGASE"/>
    <property type="match status" value="1"/>
</dbReference>
<dbReference type="PANTHER" id="PTHR43311:SF2">
    <property type="entry name" value="GLUTAMATE--TRNA LIGASE, MITOCHONDRIAL-RELATED"/>
    <property type="match status" value="1"/>
</dbReference>
<dbReference type="Pfam" id="PF19269">
    <property type="entry name" value="Anticodon_2"/>
    <property type="match status" value="1"/>
</dbReference>
<dbReference type="Pfam" id="PF00749">
    <property type="entry name" value="tRNA-synt_1c"/>
    <property type="match status" value="1"/>
</dbReference>
<dbReference type="PRINTS" id="PR00987">
    <property type="entry name" value="TRNASYNTHGLU"/>
</dbReference>
<dbReference type="SUPFAM" id="SSF48163">
    <property type="entry name" value="An anticodon-binding domain of class I aminoacyl-tRNA synthetases"/>
    <property type="match status" value="1"/>
</dbReference>
<dbReference type="SUPFAM" id="SSF52374">
    <property type="entry name" value="Nucleotidylyl transferase"/>
    <property type="match status" value="1"/>
</dbReference>
<dbReference type="PROSITE" id="PS00178">
    <property type="entry name" value="AA_TRNA_LIGASE_I"/>
    <property type="match status" value="1"/>
</dbReference>